<gene>
    <name evidence="1" type="primary">ybhG</name>
    <name type="ordered locus">SPA1935</name>
</gene>
<accession>Q5PG34</accession>
<name>YBHG_SALPA</name>
<proteinExistence type="inferred from homology"/>
<organism>
    <name type="scientific">Salmonella paratyphi A (strain ATCC 9150 / SARB42)</name>
    <dbReference type="NCBI Taxonomy" id="295319"/>
    <lineage>
        <taxon>Bacteria</taxon>
        <taxon>Pseudomonadati</taxon>
        <taxon>Pseudomonadota</taxon>
        <taxon>Gammaproteobacteria</taxon>
        <taxon>Enterobacterales</taxon>
        <taxon>Enterobacteriaceae</taxon>
        <taxon>Salmonella</taxon>
    </lineage>
</organism>
<comment type="subcellular location">
    <subcellularLocation>
        <location evidence="1">Periplasm</location>
    </subcellularLocation>
</comment>
<comment type="similarity">
    <text evidence="1">Belongs to the UPF0194 family.</text>
</comment>
<reference key="1">
    <citation type="journal article" date="2004" name="Nat. Genet.">
        <title>Comparison of genome degradation in Paratyphi A and Typhi, human-restricted serovars of Salmonella enterica that cause typhoid.</title>
        <authorList>
            <person name="McClelland M."/>
            <person name="Sanderson K.E."/>
            <person name="Clifton S.W."/>
            <person name="Latreille P."/>
            <person name="Porwollik S."/>
            <person name="Sabo A."/>
            <person name="Meyer R."/>
            <person name="Bieri T."/>
            <person name="Ozersky P."/>
            <person name="McLellan M."/>
            <person name="Harkins C.R."/>
            <person name="Wang C."/>
            <person name="Nguyen C."/>
            <person name="Berghoff A."/>
            <person name="Elliott G."/>
            <person name="Kohlberg S."/>
            <person name="Strong C."/>
            <person name="Du F."/>
            <person name="Carter J."/>
            <person name="Kremizki C."/>
            <person name="Layman D."/>
            <person name="Leonard S."/>
            <person name="Sun H."/>
            <person name="Fulton L."/>
            <person name="Nash W."/>
            <person name="Miner T."/>
            <person name="Minx P."/>
            <person name="Delehaunty K."/>
            <person name="Fronick C."/>
            <person name="Magrini V."/>
            <person name="Nhan M."/>
            <person name="Warren W."/>
            <person name="Florea L."/>
            <person name="Spieth J."/>
            <person name="Wilson R.K."/>
        </authorList>
    </citation>
    <scope>NUCLEOTIDE SEQUENCE [LARGE SCALE GENOMIC DNA]</scope>
    <source>
        <strain>ATCC 9150 / SARB42</strain>
    </source>
</reference>
<feature type="signal peptide" evidence="1">
    <location>
        <begin position="1"/>
        <end position="19"/>
    </location>
</feature>
<feature type="chain" id="PRO_1000051812" description="UPF0194 membrane protein YbhG">
    <location>
        <begin position="20"/>
        <end position="331"/>
    </location>
</feature>
<feature type="coiled-coil region" evidence="1">
    <location>
        <begin position="107"/>
        <end position="208"/>
    </location>
</feature>
<dbReference type="EMBL" id="CP000026">
    <property type="protein sequence ID" value="AAV77845.1"/>
    <property type="molecule type" value="Genomic_DNA"/>
</dbReference>
<dbReference type="SMR" id="Q5PG34"/>
<dbReference type="KEGG" id="spt:SPA1935"/>
<dbReference type="HOGENOM" id="CLU_018816_6_3_6"/>
<dbReference type="Proteomes" id="UP000008185">
    <property type="component" value="Chromosome"/>
</dbReference>
<dbReference type="GO" id="GO:0042597">
    <property type="term" value="C:periplasmic space"/>
    <property type="evidence" value="ECO:0007669"/>
    <property type="project" value="UniProtKB-SubCell"/>
</dbReference>
<dbReference type="FunFam" id="1.10.287.470:FF:000004">
    <property type="entry name" value="UPF0194 membrane protein YbhG"/>
    <property type="match status" value="1"/>
</dbReference>
<dbReference type="FunFam" id="2.40.50.100:FF:000025">
    <property type="entry name" value="UPF0194 membrane protein YbhG"/>
    <property type="match status" value="1"/>
</dbReference>
<dbReference type="Gene3D" id="2.40.30.170">
    <property type="match status" value="1"/>
</dbReference>
<dbReference type="Gene3D" id="2.40.50.100">
    <property type="match status" value="2"/>
</dbReference>
<dbReference type="Gene3D" id="1.10.287.470">
    <property type="entry name" value="Helix hairpin bin"/>
    <property type="match status" value="1"/>
</dbReference>
<dbReference type="HAMAP" id="MF_01304">
    <property type="entry name" value="UPF0194"/>
    <property type="match status" value="1"/>
</dbReference>
<dbReference type="InterPro" id="IPR032317">
    <property type="entry name" value="CusB_D23"/>
</dbReference>
<dbReference type="InterPro" id="IPR022936">
    <property type="entry name" value="UPF0194_membrane_YbhG"/>
</dbReference>
<dbReference type="InterPro" id="IPR050465">
    <property type="entry name" value="UPF0194_transport"/>
</dbReference>
<dbReference type="NCBIfam" id="NF002939">
    <property type="entry name" value="PRK03598.1"/>
    <property type="match status" value="1"/>
</dbReference>
<dbReference type="PANTHER" id="PTHR32347">
    <property type="entry name" value="EFFLUX SYSTEM COMPONENT YKNX-RELATED"/>
    <property type="match status" value="1"/>
</dbReference>
<dbReference type="PANTHER" id="PTHR32347:SF29">
    <property type="entry name" value="UPF0194 MEMBRANE PROTEIN YBHG"/>
    <property type="match status" value="1"/>
</dbReference>
<dbReference type="Pfam" id="PF16576">
    <property type="entry name" value="HlyD_D23"/>
    <property type="match status" value="1"/>
</dbReference>
<dbReference type="SUPFAM" id="SSF111369">
    <property type="entry name" value="HlyD-like secretion proteins"/>
    <property type="match status" value="3"/>
</dbReference>
<sequence>MKKPVVIGLAIAAIVAVIAGGTWWYQSRQDDGLTLYGNVDIRTVNISFRVGGRLASLNVDEGDAIKAGQVLGELDHAPYENALMQAKAGVSVAQAQYDLMLAGYRDEEIAQAAAAVRQAQAAYDYAQNFYNRQQGLWKSRTISANDLENARSSRDQAQATLKSAQDKLSQYRTGNREQDIAQAKASLEQAKAQLAQAQLDLQDTTLIAPANGTLLTRAVEPGSMLNAGSTVLTLSLTRPVWVRAYVDERNLSQTQPGRDILLYTDGRPDKPYHGKIGFVSPTAEFTPKTVETPDLRTDLVYRLRIIVTDADDALRQGMPVTVKFNDEVRHE</sequence>
<protein>
    <recommendedName>
        <fullName evidence="1">UPF0194 membrane protein YbhG</fullName>
    </recommendedName>
</protein>
<evidence type="ECO:0000255" key="1">
    <source>
        <dbReference type="HAMAP-Rule" id="MF_01304"/>
    </source>
</evidence>
<keyword id="KW-0175">Coiled coil</keyword>
<keyword id="KW-0574">Periplasm</keyword>
<keyword id="KW-0732">Signal</keyword>